<evidence type="ECO:0000250" key="1"/>
<evidence type="ECO:0000250" key="2">
    <source>
        <dbReference type="UniProtKB" id="P00157"/>
    </source>
</evidence>
<evidence type="ECO:0000250" key="3">
    <source>
        <dbReference type="UniProtKB" id="P00163"/>
    </source>
</evidence>
<evidence type="ECO:0000255" key="4">
    <source>
        <dbReference type="PROSITE-ProRule" id="PRU00967"/>
    </source>
</evidence>
<evidence type="ECO:0000255" key="5">
    <source>
        <dbReference type="PROSITE-ProRule" id="PRU00968"/>
    </source>
</evidence>
<feature type="chain" id="PRO_0000061765" description="Cytochrome b">
    <location>
        <begin position="1"/>
        <end position="389"/>
    </location>
</feature>
<feature type="transmembrane region" description="Helical" evidence="3">
    <location>
        <begin position="32"/>
        <end position="52"/>
    </location>
</feature>
<feature type="transmembrane region" description="Helical" evidence="3">
    <location>
        <begin position="76"/>
        <end position="98"/>
    </location>
</feature>
<feature type="transmembrane region" description="Helical" evidence="3">
    <location>
        <begin position="113"/>
        <end position="133"/>
    </location>
</feature>
<feature type="transmembrane region" description="Helical" evidence="3">
    <location>
        <begin position="179"/>
        <end position="199"/>
    </location>
</feature>
<feature type="transmembrane region" description="Helical" evidence="3">
    <location>
        <begin position="225"/>
        <end position="245"/>
    </location>
</feature>
<feature type="transmembrane region" description="Helical" evidence="3">
    <location>
        <begin position="289"/>
        <end position="309"/>
    </location>
</feature>
<feature type="transmembrane region" description="Helical" evidence="3">
    <location>
        <begin position="321"/>
        <end position="341"/>
    </location>
</feature>
<feature type="transmembrane region" description="Helical" evidence="3">
    <location>
        <begin position="348"/>
        <end position="368"/>
    </location>
</feature>
<feature type="binding site" description="axial binding residue" evidence="5">
    <location>
        <position position="82"/>
    </location>
    <ligand>
        <name>heme b</name>
        <dbReference type="ChEBI" id="CHEBI:60344"/>
        <label>b562</label>
    </ligand>
    <ligandPart>
        <name>Fe</name>
        <dbReference type="ChEBI" id="CHEBI:18248"/>
    </ligandPart>
</feature>
<feature type="binding site" description="axial binding residue" evidence="5">
    <location>
        <position position="96"/>
    </location>
    <ligand>
        <name>heme b</name>
        <dbReference type="ChEBI" id="CHEBI:60344"/>
        <label>b566</label>
    </ligand>
    <ligandPart>
        <name>Fe</name>
        <dbReference type="ChEBI" id="CHEBI:18248"/>
    </ligandPart>
</feature>
<feature type="binding site" description="axial binding residue" evidence="5">
    <location>
        <position position="183"/>
    </location>
    <ligand>
        <name>heme b</name>
        <dbReference type="ChEBI" id="CHEBI:60344"/>
        <label>b562</label>
    </ligand>
    <ligandPart>
        <name>Fe</name>
        <dbReference type="ChEBI" id="CHEBI:18248"/>
    </ligandPart>
</feature>
<feature type="binding site" description="axial binding residue" evidence="5">
    <location>
        <position position="197"/>
    </location>
    <ligand>
        <name>heme b</name>
        <dbReference type="ChEBI" id="CHEBI:60344"/>
        <label>b566</label>
    </ligand>
    <ligandPart>
        <name>Fe</name>
        <dbReference type="ChEBI" id="CHEBI:18248"/>
    </ligandPart>
</feature>
<feature type="binding site" evidence="2">
    <location>
        <position position="202"/>
    </location>
    <ligand>
        <name>a ubiquinone</name>
        <dbReference type="ChEBI" id="CHEBI:16389"/>
    </ligand>
</feature>
<sequence>MRLLKNNIILRLLNSYMVDSPQPANLTYLWNFGSLLGICLVLQILTGCFLAMHFTPHAEMAFNSVEHIMRDVQSGWIVRYTHANVASFFFIFVYAHIGRGLYYNSYKSPRVLLWSIGVIILVLMMAIGFLGYVIPFGQMSLWGATVITNLLSAIPVFGQDIVELIWGGFSVSNATLNRFFSLHYILPFVLAALVVAHFMALHIHGSNNPNGVTSNTDRYPMYPYFIFKDLVTIFAFFWILSVIVFFYPNLMGHQDNYIPADPMVTPASIVPEWYLLPFYAILRSIPDKLLGVVAMFGSLLILLVLPLTDLSRIRGNQFRPAMKFFFWFFVVNFIMLFWLGSQHPNTPYLEIGQLSTTFYFSFFLVIVPFTGLVENTLLDLNIKELDLNL</sequence>
<comment type="function">
    <text evidence="3">Component of the ubiquinol-cytochrome c reductase complex (complex III or cytochrome b-c1 complex) that is part of the mitochondrial respiratory chain. The b-c1 complex mediates electron transfer from ubiquinol to cytochrome c. Contributes to the generation of a proton gradient across the mitochondrial membrane that is then used for ATP synthesis.</text>
</comment>
<comment type="cofactor">
    <cofactor evidence="3">
        <name>heme b</name>
        <dbReference type="ChEBI" id="CHEBI:60344"/>
    </cofactor>
    <text evidence="3">Binds 2 heme b groups non-covalently.</text>
</comment>
<comment type="subunit">
    <text evidence="3">Fungal cytochrome b-c1 complex contains 10 subunits; 3 respiratory subunits, 2 core proteins and 5 low-molecular weight proteins. Cytochrome b-c1 complex is a homodimer.</text>
</comment>
<comment type="subcellular location">
    <subcellularLocation>
        <location evidence="3">Mitochondrion inner membrane</location>
        <topology evidence="3">Multi-pass membrane protein</topology>
    </subcellularLocation>
</comment>
<comment type="miscellaneous">
    <text evidence="1">Heme 1 (or BL or b562) is low-potential and absorbs at about 562 nm, and heme 2 (or BH or b566) is high-potential and absorbs at about 566 nm.</text>
</comment>
<comment type="similarity">
    <text evidence="4 5">Belongs to the cytochrome b family.</text>
</comment>
<comment type="caution">
    <text evidence="3">The protein contains only eight transmembrane helices, not nine as predicted by bioinformatics tools.</text>
</comment>
<gene>
    <name type="primary">COB</name>
    <name type="synonym">CYTB</name>
</gene>
<protein>
    <recommendedName>
        <fullName>Cytochrome b</fullName>
    </recommendedName>
    <alternativeName>
        <fullName>Complex III subunit 3</fullName>
    </alternativeName>
    <alternativeName>
        <fullName>Complex III subunit III</fullName>
    </alternativeName>
    <alternativeName>
        <fullName>Cytochrome b-c1 complex subunit 3</fullName>
    </alternativeName>
    <alternativeName>
        <fullName>Ubiquinol-cytochrome-c reductase complex cytochrome b subunit</fullName>
    </alternativeName>
</protein>
<dbReference type="EMBL" id="X88000">
    <property type="protein sequence ID" value="CAA61250.1"/>
    <property type="molecule type" value="mRNA"/>
</dbReference>
<dbReference type="PIR" id="S62595">
    <property type="entry name" value="S62595"/>
</dbReference>
<dbReference type="SMR" id="Q36551"/>
<dbReference type="GO" id="GO:0005743">
    <property type="term" value="C:mitochondrial inner membrane"/>
    <property type="evidence" value="ECO:0007669"/>
    <property type="project" value="UniProtKB-SubCell"/>
</dbReference>
<dbReference type="GO" id="GO:0045275">
    <property type="term" value="C:respiratory chain complex III"/>
    <property type="evidence" value="ECO:0007669"/>
    <property type="project" value="InterPro"/>
</dbReference>
<dbReference type="GO" id="GO:0046872">
    <property type="term" value="F:metal ion binding"/>
    <property type="evidence" value="ECO:0007669"/>
    <property type="project" value="UniProtKB-KW"/>
</dbReference>
<dbReference type="GO" id="GO:0008121">
    <property type="term" value="F:ubiquinol-cytochrome-c reductase activity"/>
    <property type="evidence" value="ECO:0007669"/>
    <property type="project" value="InterPro"/>
</dbReference>
<dbReference type="GO" id="GO:0006122">
    <property type="term" value="P:mitochondrial electron transport, ubiquinol to cytochrome c"/>
    <property type="evidence" value="ECO:0007669"/>
    <property type="project" value="TreeGrafter"/>
</dbReference>
<dbReference type="CDD" id="cd00290">
    <property type="entry name" value="cytochrome_b_C"/>
    <property type="match status" value="1"/>
</dbReference>
<dbReference type="CDD" id="cd00284">
    <property type="entry name" value="Cytochrome_b_N"/>
    <property type="match status" value="1"/>
</dbReference>
<dbReference type="Gene3D" id="1.20.810.10">
    <property type="entry name" value="Cytochrome Bc1 Complex, Chain C"/>
    <property type="match status" value="1"/>
</dbReference>
<dbReference type="InterPro" id="IPR005798">
    <property type="entry name" value="Cyt_b/b6_C"/>
</dbReference>
<dbReference type="InterPro" id="IPR036150">
    <property type="entry name" value="Cyt_b/b6_C_sf"/>
</dbReference>
<dbReference type="InterPro" id="IPR005797">
    <property type="entry name" value="Cyt_b/b6_N"/>
</dbReference>
<dbReference type="InterPro" id="IPR027387">
    <property type="entry name" value="Cytb/b6-like_sf"/>
</dbReference>
<dbReference type="InterPro" id="IPR030689">
    <property type="entry name" value="Cytochrome_b"/>
</dbReference>
<dbReference type="InterPro" id="IPR048260">
    <property type="entry name" value="Cytochrome_b_C_euk/bac"/>
</dbReference>
<dbReference type="InterPro" id="IPR048259">
    <property type="entry name" value="Cytochrome_b_N_euk/bac"/>
</dbReference>
<dbReference type="InterPro" id="IPR016174">
    <property type="entry name" value="Di-haem_cyt_TM"/>
</dbReference>
<dbReference type="PANTHER" id="PTHR19271">
    <property type="entry name" value="CYTOCHROME B"/>
    <property type="match status" value="1"/>
</dbReference>
<dbReference type="PANTHER" id="PTHR19271:SF16">
    <property type="entry name" value="CYTOCHROME B"/>
    <property type="match status" value="1"/>
</dbReference>
<dbReference type="Pfam" id="PF00032">
    <property type="entry name" value="Cytochrom_B_C"/>
    <property type="match status" value="1"/>
</dbReference>
<dbReference type="Pfam" id="PF00033">
    <property type="entry name" value="Cytochrome_B"/>
    <property type="match status" value="1"/>
</dbReference>
<dbReference type="PIRSF" id="PIRSF038885">
    <property type="entry name" value="COB"/>
    <property type="match status" value="1"/>
</dbReference>
<dbReference type="SUPFAM" id="SSF81648">
    <property type="entry name" value="a domain/subunit of cytochrome bc1 complex (Ubiquinol-cytochrome c reductase)"/>
    <property type="match status" value="1"/>
</dbReference>
<dbReference type="SUPFAM" id="SSF81342">
    <property type="entry name" value="Transmembrane di-heme cytochromes"/>
    <property type="match status" value="1"/>
</dbReference>
<dbReference type="PROSITE" id="PS51003">
    <property type="entry name" value="CYTB_CTER"/>
    <property type="match status" value="1"/>
</dbReference>
<dbReference type="PROSITE" id="PS51002">
    <property type="entry name" value="CYTB_NTER"/>
    <property type="match status" value="1"/>
</dbReference>
<proteinExistence type="evidence at transcript level"/>
<organism>
    <name type="scientific">Strobilurus tenacellus</name>
    <dbReference type="NCBI Taxonomy" id="41251"/>
    <lineage>
        <taxon>Eukaryota</taxon>
        <taxon>Fungi</taxon>
        <taxon>Dikarya</taxon>
        <taxon>Basidiomycota</taxon>
        <taxon>Agaricomycotina</taxon>
        <taxon>Agaricomycetes</taxon>
        <taxon>Agaricomycetidae</taxon>
        <taxon>Agaricales</taxon>
        <taxon>Marasmiineae</taxon>
        <taxon>Physalacriaceae</taxon>
        <taxon>Strobilurus</taxon>
    </lineage>
</organism>
<name>CYB_STRTC</name>
<reference key="1">
    <citation type="journal article" date="1996" name="Eur. J. Biochem.">
        <title>The molecular basis for the natural resistance of the cytochrome bc1 complex from strobilurin-producing basidiomycetes to center Qp inhibitors.</title>
        <authorList>
            <person name="Kraiczy P."/>
            <person name="Haase U."/>
            <person name="Gencic S."/>
            <person name="Flindt S."/>
            <person name="Anke T."/>
            <person name="Brandt U."/>
            <person name="von Jagow G."/>
        </authorList>
    </citation>
    <scope>NUCLEOTIDE SEQUENCE [MRNA]</scope>
    <source>
        <strain>8013</strain>
    </source>
</reference>
<keyword id="KW-0249">Electron transport</keyword>
<keyword id="KW-0349">Heme</keyword>
<keyword id="KW-0408">Iron</keyword>
<keyword id="KW-0472">Membrane</keyword>
<keyword id="KW-0479">Metal-binding</keyword>
<keyword id="KW-0496">Mitochondrion</keyword>
<keyword id="KW-0999">Mitochondrion inner membrane</keyword>
<keyword id="KW-0679">Respiratory chain</keyword>
<keyword id="KW-0812">Transmembrane</keyword>
<keyword id="KW-1133">Transmembrane helix</keyword>
<keyword id="KW-0813">Transport</keyword>
<keyword id="KW-0830">Ubiquinone</keyword>
<accession>Q36551</accession>
<geneLocation type="mitochondrion"/>